<organism>
    <name type="scientific">Citrifermentans bemidjiense (strain ATCC BAA-1014 / DSM 16622 / JCM 12645 / Bem)</name>
    <name type="common">Geobacter bemidjiensis</name>
    <dbReference type="NCBI Taxonomy" id="404380"/>
    <lineage>
        <taxon>Bacteria</taxon>
        <taxon>Pseudomonadati</taxon>
        <taxon>Thermodesulfobacteriota</taxon>
        <taxon>Desulfuromonadia</taxon>
        <taxon>Geobacterales</taxon>
        <taxon>Geobacteraceae</taxon>
        <taxon>Citrifermentans</taxon>
    </lineage>
</organism>
<protein>
    <recommendedName>
        <fullName evidence="1">UDP-N-acetylmuramoylalanine--D-glutamate ligase</fullName>
        <ecNumber evidence="1">6.3.2.9</ecNumber>
    </recommendedName>
    <alternativeName>
        <fullName evidence="1">D-glutamic acid-adding enzyme</fullName>
    </alternativeName>
    <alternativeName>
        <fullName evidence="1">UDP-N-acetylmuramoyl-L-alanyl-D-glutamate synthetase</fullName>
    </alternativeName>
</protein>
<keyword id="KW-0067">ATP-binding</keyword>
<keyword id="KW-0131">Cell cycle</keyword>
<keyword id="KW-0132">Cell division</keyword>
<keyword id="KW-0133">Cell shape</keyword>
<keyword id="KW-0961">Cell wall biogenesis/degradation</keyword>
<keyword id="KW-0963">Cytoplasm</keyword>
<keyword id="KW-0436">Ligase</keyword>
<keyword id="KW-0547">Nucleotide-binding</keyword>
<keyword id="KW-0573">Peptidoglycan synthesis</keyword>
<keyword id="KW-1185">Reference proteome</keyword>
<sequence>MELKDKKILVVGLAKTGVAVTRFLAQAGAFVTVTDMREEEALSDVLAELSDLDITYELGRHVPYSFLMADLIVVSPGVPMDIKPLEMARSQKRRVVSEVELASWFIKAPMVAITGTNGKTTTTTLTGEIFKACGFETFVGGNIGNPLIELAESGQEVSRVVVELSSFQLEGVESFRPDVAVLLNITEDHLDRYHSFQEYIDAKLRIFENQTADDFAVLNIDDPLVAACASKLKAQLFPMSRLHELEEGISYRDGFITFSHKGKVLRFGTEGFKLKGVHNLDNIMASLASTLLMRCDGDCAYEAVKNFKGLPHRMELVEEIDGVAYYEDSKGTNVGSVVKSLESFDSGITLIAGGKDKGGSYEPLAPLVESRVSHLVLIGEAKARMNEALGSLTDTHLAETLEEAVEISRRLTKPGGVVLFSPACSSFDMFKNYEERAQRFKAAVRAGKKGEA</sequence>
<feature type="chain" id="PRO_1000130857" description="UDP-N-acetylmuramoylalanine--D-glutamate ligase">
    <location>
        <begin position="1"/>
        <end position="452"/>
    </location>
</feature>
<feature type="binding site" evidence="1">
    <location>
        <begin position="115"/>
        <end position="121"/>
    </location>
    <ligand>
        <name>ATP</name>
        <dbReference type="ChEBI" id="CHEBI:30616"/>
    </ligand>
</feature>
<gene>
    <name evidence="1" type="primary">murD</name>
    <name type="ordered locus">Gbem_0489</name>
</gene>
<comment type="function">
    <text evidence="1">Cell wall formation. Catalyzes the addition of glutamate to the nucleotide precursor UDP-N-acetylmuramoyl-L-alanine (UMA).</text>
</comment>
<comment type="catalytic activity">
    <reaction evidence="1">
        <text>UDP-N-acetyl-alpha-D-muramoyl-L-alanine + D-glutamate + ATP = UDP-N-acetyl-alpha-D-muramoyl-L-alanyl-D-glutamate + ADP + phosphate + H(+)</text>
        <dbReference type="Rhea" id="RHEA:16429"/>
        <dbReference type="ChEBI" id="CHEBI:15378"/>
        <dbReference type="ChEBI" id="CHEBI:29986"/>
        <dbReference type="ChEBI" id="CHEBI:30616"/>
        <dbReference type="ChEBI" id="CHEBI:43474"/>
        <dbReference type="ChEBI" id="CHEBI:83898"/>
        <dbReference type="ChEBI" id="CHEBI:83900"/>
        <dbReference type="ChEBI" id="CHEBI:456216"/>
        <dbReference type="EC" id="6.3.2.9"/>
    </reaction>
</comment>
<comment type="pathway">
    <text evidence="1">Cell wall biogenesis; peptidoglycan biosynthesis.</text>
</comment>
<comment type="subcellular location">
    <subcellularLocation>
        <location evidence="1">Cytoplasm</location>
    </subcellularLocation>
</comment>
<comment type="similarity">
    <text evidence="1">Belongs to the MurCDEF family.</text>
</comment>
<accession>B5EBP9</accession>
<proteinExistence type="inferred from homology"/>
<dbReference type="EC" id="6.3.2.9" evidence="1"/>
<dbReference type="EMBL" id="CP001124">
    <property type="protein sequence ID" value="ACH37518.1"/>
    <property type="molecule type" value="Genomic_DNA"/>
</dbReference>
<dbReference type="RefSeq" id="WP_012528925.1">
    <property type="nucleotide sequence ID" value="NC_011146.1"/>
</dbReference>
<dbReference type="SMR" id="B5EBP9"/>
<dbReference type="STRING" id="404380.Gbem_0489"/>
<dbReference type="KEGG" id="gbm:Gbem_0489"/>
<dbReference type="eggNOG" id="COG0771">
    <property type="taxonomic scope" value="Bacteria"/>
</dbReference>
<dbReference type="HOGENOM" id="CLU_032540_0_0_7"/>
<dbReference type="OrthoDB" id="9809796at2"/>
<dbReference type="UniPathway" id="UPA00219"/>
<dbReference type="Proteomes" id="UP000008825">
    <property type="component" value="Chromosome"/>
</dbReference>
<dbReference type="GO" id="GO:0005737">
    <property type="term" value="C:cytoplasm"/>
    <property type="evidence" value="ECO:0007669"/>
    <property type="project" value="UniProtKB-SubCell"/>
</dbReference>
<dbReference type="GO" id="GO:0005524">
    <property type="term" value="F:ATP binding"/>
    <property type="evidence" value="ECO:0007669"/>
    <property type="project" value="UniProtKB-UniRule"/>
</dbReference>
<dbReference type="GO" id="GO:0008764">
    <property type="term" value="F:UDP-N-acetylmuramoylalanine-D-glutamate ligase activity"/>
    <property type="evidence" value="ECO:0007669"/>
    <property type="project" value="UniProtKB-UniRule"/>
</dbReference>
<dbReference type="GO" id="GO:0051301">
    <property type="term" value="P:cell division"/>
    <property type="evidence" value="ECO:0007669"/>
    <property type="project" value="UniProtKB-KW"/>
</dbReference>
<dbReference type="GO" id="GO:0071555">
    <property type="term" value="P:cell wall organization"/>
    <property type="evidence" value="ECO:0007669"/>
    <property type="project" value="UniProtKB-KW"/>
</dbReference>
<dbReference type="GO" id="GO:0009252">
    <property type="term" value="P:peptidoglycan biosynthetic process"/>
    <property type="evidence" value="ECO:0007669"/>
    <property type="project" value="UniProtKB-UniRule"/>
</dbReference>
<dbReference type="GO" id="GO:0008360">
    <property type="term" value="P:regulation of cell shape"/>
    <property type="evidence" value="ECO:0007669"/>
    <property type="project" value="UniProtKB-KW"/>
</dbReference>
<dbReference type="Gene3D" id="3.90.190.20">
    <property type="entry name" value="Mur ligase, C-terminal domain"/>
    <property type="match status" value="1"/>
</dbReference>
<dbReference type="Gene3D" id="3.40.1190.10">
    <property type="entry name" value="Mur-like, catalytic domain"/>
    <property type="match status" value="1"/>
</dbReference>
<dbReference type="Gene3D" id="3.40.50.720">
    <property type="entry name" value="NAD(P)-binding Rossmann-like Domain"/>
    <property type="match status" value="1"/>
</dbReference>
<dbReference type="HAMAP" id="MF_00639">
    <property type="entry name" value="MurD"/>
    <property type="match status" value="1"/>
</dbReference>
<dbReference type="InterPro" id="IPR036565">
    <property type="entry name" value="Mur-like_cat_sf"/>
</dbReference>
<dbReference type="InterPro" id="IPR004101">
    <property type="entry name" value="Mur_ligase_C"/>
</dbReference>
<dbReference type="InterPro" id="IPR036615">
    <property type="entry name" value="Mur_ligase_C_dom_sf"/>
</dbReference>
<dbReference type="InterPro" id="IPR013221">
    <property type="entry name" value="Mur_ligase_cen"/>
</dbReference>
<dbReference type="InterPro" id="IPR005762">
    <property type="entry name" value="MurD"/>
</dbReference>
<dbReference type="NCBIfam" id="TIGR01087">
    <property type="entry name" value="murD"/>
    <property type="match status" value="1"/>
</dbReference>
<dbReference type="PANTHER" id="PTHR43692">
    <property type="entry name" value="UDP-N-ACETYLMURAMOYLALANINE--D-GLUTAMATE LIGASE"/>
    <property type="match status" value="1"/>
</dbReference>
<dbReference type="PANTHER" id="PTHR43692:SF1">
    <property type="entry name" value="UDP-N-ACETYLMURAMOYLALANINE--D-GLUTAMATE LIGASE"/>
    <property type="match status" value="1"/>
</dbReference>
<dbReference type="Pfam" id="PF02875">
    <property type="entry name" value="Mur_ligase_C"/>
    <property type="match status" value="1"/>
</dbReference>
<dbReference type="Pfam" id="PF08245">
    <property type="entry name" value="Mur_ligase_M"/>
    <property type="match status" value="1"/>
</dbReference>
<dbReference type="Pfam" id="PF21799">
    <property type="entry name" value="MurD-like_N"/>
    <property type="match status" value="1"/>
</dbReference>
<dbReference type="SUPFAM" id="SSF51984">
    <property type="entry name" value="MurCD N-terminal domain"/>
    <property type="match status" value="1"/>
</dbReference>
<dbReference type="SUPFAM" id="SSF53623">
    <property type="entry name" value="MurD-like peptide ligases, catalytic domain"/>
    <property type="match status" value="1"/>
</dbReference>
<dbReference type="SUPFAM" id="SSF53244">
    <property type="entry name" value="MurD-like peptide ligases, peptide-binding domain"/>
    <property type="match status" value="1"/>
</dbReference>
<reference key="1">
    <citation type="submission" date="2008-07" db="EMBL/GenBank/DDBJ databases">
        <title>Complete sequence of Geobacter bemidjiensis BEM.</title>
        <authorList>
            <consortium name="US DOE Joint Genome Institute"/>
            <person name="Lucas S."/>
            <person name="Copeland A."/>
            <person name="Lapidus A."/>
            <person name="Glavina del Rio T."/>
            <person name="Dalin E."/>
            <person name="Tice H."/>
            <person name="Bruce D."/>
            <person name="Goodwin L."/>
            <person name="Pitluck S."/>
            <person name="Kiss H."/>
            <person name="Brettin T."/>
            <person name="Detter J.C."/>
            <person name="Han C."/>
            <person name="Kuske C.R."/>
            <person name="Schmutz J."/>
            <person name="Larimer F."/>
            <person name="Land M."/>
            <person name="Hauser L."/>
            <person name="Kyrpides N."/>
            <person name="Lykidis A."/>
            <person name="Lovley D."/>
            <person name="Richardson P."/>
        </authorList>
    </citation>
    <scope>NUCLEOTIDE SEQUENCE [LARGE SCALE GENOMIC DNA]</scope>
    <source>
        <strain>ATCC BAA-1014 / DSM 16622 / JCM 12645 / Bem</strain>
    </source>
</reference>
<name>MURD_CITBB</name>
<evidence type="ECO:0000255" key="1">
    <source>
        <dbReference type="HAMAP-Rule" id="MF_00639"/>
    </source>
</evidence>